<gene>
    <name type="primary">PAX9</name>
</gene>
<accession>Q2VL50</accession>
<feature type="chain" id="PRO_0000050211" description="Paired box protein Pax-9">
    <location>
        <begin position="1"/>
        <end position="341"/>
    </location>
</feature>
<feature type="DNA-binding region" description="Paired" evidence="2">
    <location>
        <begin position="4"/>
        <end position="130"/>
    </location>
</feature>
<feature type="region of interest" description="PAI subdomain" evidence="2">
    <location>
        <begin position="7"/>
        <end position="63"/>
    </location>
</feature>
<feature type="region of interest" description="RED subdomain" evidence="2">
    <location>
        <begin position="82"/>
        <end position="130"/>
    </location>
</feature>
<feature type="region of interest" description="Interaction with KDM5B" evidence="1">
    <location>
        <begin position="168"/>
        <end position="189"/>
    </location>
</feature>
<proteinExistence type="inferred from homology"/>
<protein>
    <recommendedName>
        <fullName>Paired box protein Pax-9</fullName>
    </recommendedName>
</protein>
<sequence>MEPAFGEVNQLGGVFVNGRPLPNAIRLRIVELAQLGIRPCDISRQLRVSHGCVSKILARYNETGSILPGAIGGSKPRVTTPTVVKHIRTYKQRDPGIFAWEIRDRLLADGVCDKYNVPSVSSISRILRNKIGNLAQQGHYDSYKQHQPAPQPALPYNHIYSYPSPITAAAAKVPTPPGVPAIPGSVAMPRTWPSSHSVTDILGIRSITDQVNDSSPYHSPKVEEWSSLGRNNFPAAAPHAVNGLEKGALEQEAKYGQAPNGLPAVSSFVSASSMAPYPTPAQVSPYMTYSAAPSGYVAGHGWQHAGGTPLSPHNCDIPASLAFKGMQAAREGSHSVTASAL</sequence>
<organism>
    <name type="scientific">Propithecus coquereli</name>
    <name type="common">Coquerel's sifaka</name>
    <name type="synonym">Propithecus verreauxi coquereli</name>
    <dbReference type="NCBI Taxonomy" id="379532"/>
    <lineage>
        <taxon>Eukaryota</taxon>
        <taxon>Metazoa</taxon>
        <taxon>Chordata</taxon>
        <taxon>Craniata</taxon>
        <taxon>Vertebrata</taxon>
        <taxon>Euteleostomi</taxon>
        <taxon>Mammalia</taxon>
        <taxon>Eutheria</taxon>
        <taxon>Euarchontoglires</taxon>
        <taxon>Primates</taxon>
        <taxon>Strepsirrhini</taxon>
        <taxon>Lemuriformes</taxon>
        <taxon>Indriidae</taxon>
        <taxon>Propithecus</taxon>
    </lineage>
</organism>
<keyword id="KW-0217">Developmental protein</keyword>
<keyword id="KW-0238">DNA-binding</keyword>
<keyword id="KW-0539">Nucleus</keyword>
<keyword id="KW-0563">Paired box</keyword>
<keyword id="KW-1185">Reference proteome</keyword>
<keyword id="KW-0804">Transcription</keyword>
<keyword id="KW-0805">Transcription regulation</keyword>
<evidence type="ECO:0000250" key="1"/>
<evidence type="ECO:0000255" key="2">
    <source>
        <dbReference type="PROSITE-ProRule" id="PRU00381"/>
    </source>
</evidence>
<dbReference type="EMBL" id="DQ067543">
    <property type="protein sequence ID" value="AAZ39866.1"/>
    <property type="molecule type" value="Genomic_DNA"/>
</dbReference>
<dbReference type="EMBL" id="DQ067541">
    <property type="protein sequence ID" value="AAZ39866.1"/>
    <property type="status" value="JOINED"/>
    <property type="molecule type" value="Genomic_DNA"/>
</dbReference>
<dbReference type="EMBL" id="DQ067542">
    <property type="protein sequence ID" value="AAZ39866.1"/>
    <property type="status" value="JOINED"/>
    <property type="molecule type" value="Genomic_DNA"/>
</dbReference>
<dbReference type="RefSeq" id="XP_012513511.1">
    <property type="nucleotide sequence ID" value="XM_012658057.1"/>
</dbReference>
<dbReference type="SMR" id="Q2VL50"/>
<dbReference type="STRING" id="379532.ENSPCOP00000020021"/>
<dbReference type="Ensembl" id="ENSPCOT00000030670.1">
    <property type="protein sequence ID" value="ENSPCOP00000020019.1"/>
    <property type="gene ID" value="ENSPCOG00000021966.1"/>
</dbReference>
<dbReference type="GeneID" id="105821363"/>
<dbReference type="KEGG" id="pcoq:105821363"/>
<dbReference type="CTD" id="5083"/>
<dbReference type="GeneTree" id="ENSGT00940000159896"/>
<dbReference type="OMA" id="STMAPYP"/>
<dbReference type="Proteomes" id="UP000233160">
    <property type="component" value="Unassembled WGS sequence"/>
</dbReference>
<dbReference type="GO" id="GO:0005634">
    <property type="term" value="C:nucleus"/>
    <property type="evidence" value="ECO:0007669"/>
    <property type="project" value="UniProtKB-SubCell"/>
</dbReference>
<dbReference type="GO" id="GO:0000981">
    <property type="term" value="F:DNA-binding transcription factor activity, RNA polymerase II-specific"/>
    <property type="evidence" value="ECO:0007669"/>
    <property type="project" value="TreeGrafter"/>
</dbReference>
<dbReference type="GO" id="GO:0000978">
    <property type="term" value="F:RNA polymerase II cis-regulatory region sequence-specific DNA binding"/>
    <property type="evidence" value="ECO:0007669"/>
    <property type="project" value="TreeGrafter"/>
</dbReference>
<dbReference type="CDD" id="cd00131">
    <property type="entry name" value="PAX"/>
    <property type="match status" value="1"/>
</dbReference>
<dbReference type="FunFam" id="1.10.10.10:FF:000003">
    <property type="entry name" value="Paired box protein Pax-6"/>
    <property type="match status" value="1"/>
</dbReference>
<dbReference type="FunFam" id="1.10.10.10:FF:000084">
    <property type="entry name" value="paired box protein Pax-9"/>
    <property type="match status" value="1"/>
</dbReference>
<dbReference type="Gene3D" id="1.10.10.10">
    <property type="entry name" value="Winged helix-like DNA-binding domain superfamily/Winged helix DNA-binding domain"/>
    <property type="match status" value="2"/>
</dbReference>
<dbReference type="InterPro" id="IPR009057">
    <property type="entry name" value="Homeodomain-like_sf"/>
</dbReference>
<dbReference type="InterPro" id="IPR043182">
    <property type="entry name" value="PAIRED_DNA-bd_dom"/>
</dbReference>
<dbReference type="InterPro" id="IPR001523">
    <property type="entry name" value="Paired_dom"/>
</dbReference>
<dbReference type="InterPro" id="IPR043565">
    <property type="entry name" value="PAX_fam"/>
</dbReference>
<dbReference type="InterPro" id="IPR036388">
    <property type="entry name" value="WH-like_DNA-bd_sf"/>
</dbReference>
<dbReference type="PANTHER" id="PTHR45636">
    <property type="entry name" value="PAIRED BOX PROTEIN PAX-6-RELATED-RELATED"/>
    <property type="match status" value="1"/>
</dbReference>
<dbReference type="PANTHER" id="PTHR45636:SF13">
    <property type="entry name" value="PAIRED BOX PROTEIN PAX-9"/>
    <property type="match status" value="1"/>
</dbReference>
<dbReference type="Pfam" id="PF00292">
    <property type="entry name" value="PAX"/>
    <property type="match status" value="1"/>
</dbReference>
<dbReference type="PRINTS" id="PR00027">
    <property type="entry name" value="PAIREDBOX"/>
</dbReference>
<dbReference type="SMART" id="SM00351">
    <property type="entry name" value="PAX"/>
    <property type="match status" value="1"/>
</dbReference>
<dbReference type="SUPFAM" id="SSF46689">
    <property type="entry name" value="Homeodomain-like"/>
    <property type="match status" value="1"/>
</dbReference>
<dbReference type="PROSITE" id="PS00034">
    <property type="entry name" value="PAIRED_1"/>
    <property type="match status" value="1"/>
</dbReference>
<dbReference type="PROSITE" id="PS51057">
    <property type="entry name" value="PAIRED_2"/>
    <property type="match status" value="1"/>
</dbReference>
<name>PAX9_PROCO</name>
<comment type="function">
    <text evidence="1">Transcription factor required for normal development of thymus, parathyroid glands, ultimobranchial bodies, teeth, skeletal elements of skull and larynx as well as distal limbs.</text>
</comment>
<comment type="subunit">
    <text evidence="1">Interacts with KDM5B.</text>
</comment>
<comment type="subcellular location">
    <subcellularLocation>
        <location>Nucleus</location>
    </subcellularLocation>
</comment>
<reference key="1">
    <citation type="journal article" date="2006" name="Mol. Biol. Evol.">
        <title>Molecular evolution of the primate developmental genes MSX1 and PAX9.</title>
        <authorList>
            <person name="Perry G.H."/>
            <person name="Verrelli B.C."/>
            <person name="Stone A.C."/>
        </authorList>
    </citation>
    <scope>NUCLEOTIDE SEQUENCE [GENOMIC DNA]</scope>
    <source>
        <strain>Isolate 6667</strain>
    </source>
</reference>